<organism>
    <name type="scientific">Cupiennius salei</name>
    <name type="common">American wandering spider</name>
    <dbReference type="NCBI Taxonomy" id="6928"/>
    <lineage>
        <taxon>Eukaryota</taxon>
        <taxon>Metazoa</taxon>
        <taxon>Ecdysozoa</taxon>
        <taxon>Arthropoda</taxon>
        <taxon>Chelicerata</taxon>
        <taxon>Arachnida</taxon>
        <taxon>Araneae</taxon>
        <taxon>Araneomorphae</taxon>
        <taxon>Entelegynae</taxon>
        <taxon>Lycosoidea</taxon>
        <taxon>Ctenidae</taxon>
        <taxon>Cupiennius</taxon>
    </lineage>
</organism>
<accession>B3EWX0</accession>
<keyword id="KW-0027">Amidation</keyword>
<keyword id="KW-0903">Direct protein sequencing</keyword>
<keyword id="KW-0964">Secreted</keyword>
<keyword id="KW-0800">Toxin</keyword>
<sequence>LNPFRWVINKYREWKNKKDS</sequence>
<proteinExistence type="evidence at protein level"/>
<comment type="subcellular location">
    <subcellularLocation>
        <location evidence="1">Secreted</location>
    </subcellularLocation>
</comment>
<comment type="tissue specificity">
    <text evidence="5">Expressed by the venom gland.</text>
</comment>
<comment type="mass spectrometry"/>
<comment type="similarity">
    <text evidence="4">Belongs to the cationic peptide 04 (cupiennin) family. 09 subfamily.</text>
</comment>
<protein>
    <recommendedName>
        <fullName evidence="3">Short cationic peptide-6a</fullName>
        <shortName evidence="3">SCP-6a</shortName>
    </recommendedName>
    <alternativeName>
        <fullName evidence="2">Short cationic peptide-6f</fullName>
        <shortName evidence="2">SCP-6f</shortName>
    </alternativeName>
    <alternativeName>
        <fullName evidence="3">Truncated variant of Cupiennin 6 family</fullName>
    </alternativeName>
</protein>
<evidence type="ECO:0000269" key="1">
    <source>
    </source>
</evidence>
<evidence type="ECO:0000303" key="2">
    <source>
    </source>
</evidence>
<evidence type="ECO:0000303" key="3">
    <source ref="2"/>
</evidence>
<evidence type="ECO:0000305" key="4"/>
<evidence type="ECO:0000305" key="5">
    <source>
    </source>
</evidence>
<name>TXS6A_CUPSA</name>
<reference key="1">
    <citation type="journal article" date="2012" name="FEBS J.">
        <title>Multicomponent venom of the spider Cupiennius salei: a bioanalytical investigation applying different strategies.</title>
        <authorList>
            <person name="Trachsel C."/>
            <person name="Siegemund D."/>
            <person name="Kampfer U."/>
            <person name="Kopp L.S."/>
            <person name="Buhr C."/>
            <person name="Grossmann J."/>
            <person name="Luthi C."/>
            <person name="Cunningham M."/>
            <person name="Nentwig W."/>
            <person name="Kuhn-Nentwig L."/>
            <person name="Schurch S."/>
            <person name="Schaller J."/>
        </authorList>
    </citation>
    <scope>PROTEIN SEQUENCE</scope>
    <scope>MASS SPECTROMETRY</scope>
    <scope>AMIDATION AT SER-20</scope>
    <source>
        <tissue>Venom</tissue>
    </source>
</reference>
<reference key="2">
    <citation type="unpublished observations" date="2015-06">
        <authorList>
            <person name="Kuhn-Nentwig L."/>
            <person name="Gohel T."/>
        </authorList>
    </citation>
    <scope>NOMENCLATURE</scope>
</reference>
<dbReference type="GO" id="GO:0005576">
    <property type="term" value="C:extracellular region"/>
    <property type="evidence" value="ECO:0007669"/>
    <property type="project" value="UniProtKB-SubCell"/>
</dbReference>
<dbReference type="GO" id="GO:0090729">
    <property type="term" value="F:toxin activity"/>
    <property type="evidence" value="ECO:0007669"/>
    <property type="project" value="UniProtKB-KW"/>
</dbReference>
<feature type="peptide" id="PRO_0000421229" description="Short cationic peptide-6a" evidence="1">
    <location>
        <begin position="1"/>
        <end position="20"/>
    </location>
</feature>
<feature type="modified residue" description="Serine amide" evidence="1">
    <location>
        <position position="20"/>
    </location>
</feature>